<comment type="similarity">
    <text evidence="3">Belongs to the glutaredoxin family. Monothiol subfamily.</text>
</comment>
<comment type="sequence caution" evidence="3">
    <conflict type="erroneous initiation">
        <sequence resource="EMBL-CDS" id="CAA72459"/>
    </conflict>
    <text>Truncated N-terminus.</text>
</comment>
<keyword id="KW-0001">2Fe-2S</keyword>
<keyword id="KW-0408">Iron</keyword>
<keyword id="KW-0411">Iron-sulfur</keyword>
<keyword id="KW-0479">Metal-binding</keyword>
<keyword id="KW-0676">Redox-active center</keyword>
<keyword id="KW-1185">Reference proteome</keyword>
<organism>
    <name type="scientific">Rickettsia prowazekii (strain Madrid E)</name>
    <dbReference type="NCBI Taxonomy" id="272947"/>
    <lineage>
        <taxon>Bacteria</taxon>
        <taxon>Pseudomonadati</taxon>
        <taxon>Pseudomonadota</taxon>
        <taxon>Alphaproteobacteria</taxon>
        <taxon>Rickettsiales</taxon>
        <taxon>Rickettsiaceae</taxon>
        <taxon>Rickettsieae</taxon>
        <taxon>Rickettsia</taxon>
        <taxon>typhus group</taxon>
    </lineage>
</organism>
<dbReference type="EMBL" id="Y11778">
    <property type="protein sequence ID" value="CAA72459.1"/>
    <property type="status" value="ALT_INIT"/>
    <property type="molecule type" value="Genomic_DNA"/>
</dbReference>
<dbReference type="EMBL" id="AJ235273">
    <property type="protein sequence ID" value="CAA15173.1"/>
    <property type="molecule type" value="Genomic_DNA"/>
</dbReference>
<dbReference type="PIR" id="E71634">
    <property type="entry name" value="E71634"/>
</dbReference>
<dbReference type="RefSeq" id="NP_221097.1">
    <property type="nucleotide sequence ID" value="NC_000963.1"/>
</dbReference>
<dbReference type="SMR" id="O05957"/>
<dbReference type="STRING" id="272947.gene:17555815"/>
<dbReference type="EnsemblBacteria" id="CAA15173">
    <property type="protein sequence ID" value="CAA15173"/>
    <property type="gene ID" value="CAA15173"/>
</dbReference>
<dbReference type="KEGG" id="rpr:RP745"/>
<dbReference type="PATRIC" id="fig|272947.5.peg.778"/>
<dbReference type="eggNOG" id="COG0278">
    <property type="taxonomic scope" value="Bacteria"/>
</dbReference>
<dbReference type="HOGENOM" id="CLU_026126_2_1_5"/>
<dbReference type="OrthoDB" id="9804115at2"/>
<dbReference type="Proteomes" id="UP000002480">
    <property type="component" value="Chromosome"/>
</dbReference>
<dbReference type="GO" id="GO:0051537">
    <property type="term" value="F:2 iron, 2 sulfur cluster binding"/>
    <property type="evidence" value="ECO:0007669"/>
    <property type="project" value="UniProtKB-KW"/>
</dbReference>
<dbReference type="GO" id="GO:0015036">
    <property type="term" value="F:disulfide oxidoreductase activity"/>
    <property type="evidence" value="ECO:0007669"/>
    <property type="project" value="InterPro"/>
</dbReference>
<dbReference type="GO" id="GO:0046872">
    <property type="term" value="F:metal ion binding"/>
    <property type="evidence" value="ECO:0007669"/>
    <property type="project" value="UniProtKB-KW"/>
</dbReference>
<dbReference type="CDD" id="cd03028">
    <property type="entry name" value="GRX_PICOT_like"/>
    <property type="match status" value="1"/>
</dbReference>
<dbReference type="FunFam" id="3.40.30.10:FF:000005">
    <property type="entry name" value="Glutaredoxin 5"/>
    <property type="match status" value="1"/>
</dbReference>
<dbReference type="Gene3D" id="3.40.30.10">
    <property type="entry name" value="Glutaredoxin"/>
    <property type="match status" value="1"/>
</dbReference>
<dbReference type="InterPro" id="IPR002109">
    <property type="entry name" value="Glutaredoxin"/>
</dbReference>
<dbReference type="InterPro" id="IPR033658">
    <property type="entry name" value="GRX_PICOT-like"/>
</dbReference>
<dbReference type="InterPro" id="IPR014434">
    <property type="entry name" value="Monothiol_GRX"/>
</dbReference>
<dbReference type="InterPro" id="IPR004480">
    <property type="entry name" value="Monothiol_GRX-rel"/>
</dbReference>
<dbReference type="InterPro" id="IPR036249">
    <property type="entry name" value="Thioredoxin-like_sf"/>
</dbReference>
<dbReference type="NCBIfam" id="TIGR00365">
    <property type="entry name" value="Grx4 family monothiol glutaredoxin"/>
    <property type="match status" value="1"/>
</dbReference>
<dbReference type="PANTHER" id="PTHR10293">
    <property type="entry name" value="GLUTAREDOXIN FAMILY MEMBER"/>
    <property type="match status" value="1"/>
</dbReference>
<dbReference type="PANTHER" id="PTHR10293:SF16">
    <property type="entry name" value="GLUTAREDOXIN-RELATED PROTEIN 5, MITOCHONDRIAL"/>
    <property type="match status" value="1"/>
</dbReference>
<dbReference type="Pfam" id="PF00462">
    <property type="entry name" value="Glutaredoxin"/>
    <property type="match status" value="1"/>
</dbReference>
<dbReference type="PIRSF" id="PIRSF005894">
    <property type="entry name" value="Monothiol_GRX"/>
    <property type="match status" value="1"/>
</dbReference>
<dbReference type="SUPFAM" id="SSF52833">
    <property type="entry name" value="Thioredoxin-like"/>
    <property type="match status" value="1"/>
</dbReference>
<dbReference type="PROSITE" id="PS51354">
    <property type="entry name" value="GLUTAREDOXIN_2"/>
    <property type="match status" value="1"/>
</dbReference>
<accession>O05957</accession>
<protein>
    <recommendedName>
        <fullName>Probable monothiol glutaredoxin 2</fullName>
    </recommendedName>
</protein>
<reference key="1">
    <citation type="journal article" date="1997" name="Microbiology">
        <title>Genomic rearrangements during evolution of the obligate intracellular parasite Rickettsia prowazekii as inferred from an analysis of 52015 bp nucleotide sequence.</title>
        <authorList>
            <person name="Andersson J.O."/>
            <person name="Andersson S.G.E."/>
        </authorList>
    </citation>
    <scope>NUCLEOTIDE SEQUENCE [GENOMIC DNA]</scope>
    <source>
        <strain>Madrid E</strain>
    </source>
</reference>
<reference key="2">
    <citation type="journal article" date="1998" name="Nature">
        <title>The genome sequence of Rickettsia prowazekii and the origin of mitochondria.</title>
        <authorList>
            <person name="Andersson S.G.E."/>
            <person name="Zomorodipour A."/>
            <person name="Andersson J.O."/>
            <person name="Sicheritz-Ponten T."/>
            <person name="Alsmark U.C.M."/>
            <person name="Podowski R.M."/>
            <person name="Naeslund A.K."/>
            <person name="Eriksson A.-S."/>
            <person name="Winkler H.H."/>
            <person name="Kurland C.G."/>
        </authorList>
    </citation>
    <scope>NUCLEOTIDE SEQUENCE [LARGE SCALE GENOMIC DNA]</scope>
    <source>
        <strain>Madrid E</strain>
    </source>
</reference>
<feature type="chain" id="PRO_0000102265" description="Probable monothiol glutaredoxin 2">
    <location>
        <begin position="1"/>
        <end position="107"/>
    </location>
</feature>
<feature type="domain" description="Glutaredoxin" evidence="2">
    <location>
        <begin position="7"/>
        <end position="107"/>
    </location>
</feature>
<feature type="binding site" evidence="1">
    <location>
        <position position="24"/>
    </location>
    <ligand>
        <name>glutathione</name>
        <dbReference type="ChEBI" id="CHEBI:57925"/>
    </ligand>
</feature>
<feature type="binding site" evidence="1">
    <location>
        <position position="32"/>
    </location>
    <ligand>
        <name>[2Fe-2S] cluster</name>
        <dbReference type="ChEBI" id="CHEBI:190135"/>
        <note>ligand shared between dimeric partners</note>
    </ligand>
</feature>
<feature type="binding site" evidence="1">
    <location>
        <position position="61"/>
    </location>
    <ligand>
        <name>glutathione</name>
        <dbReference type="ChEBI" id="CHEBI:57925"/>
    </ligand>
</feature>
<feature type="binding site" evidence="1">
    <location>
        <position position="73"/>
    </location>
    <ligand>
        <name>glutathione</name>
        <dbReference type="ChEBI" id="CHEBI:57925"/>
    </ligand>
</feature>
<feature type="binding site" evidence="1">
    <location>
        <begin position="86"/>
        <end position="87"/>
    </location>
    <ligand>
        <name>glutathione</name>
        <dbReference type="ChEBI" id="CHEBI:57925"/>
    </ligand>
</feature>
<sequence length="107" mass="12003">MTKNKNLEFIQNAIKKNKVVLFMKGTKEMPACGFSGTVVAILNKLGVEFSDINVLFDTALREDLKKFSDWPTFPQLYINGVLVGGCDIAKELYQNGELEKMLKDVVV</sequence>
<name>GLRX2_RICPR</name>
<proteinExistence type="inferred from homology"/>
<gene>
    <name type="primary">grxC2</name>
    <name type="synonym">grlA</name>
    <name type="ordered locus">RP745</name>
</gene>
<evidence type="ECO:0000250" key="1"/>
<evidence type="ECO:0000255" key="2">
    <source>
        <dbReference type="PROSITE-ProRule" id="PRU00686"/>
    </source>
</evidence>
<evidence type="ECO:0000305" key="3"/>